<proteinExistence type="inferred from homology"/>
<protein>
    <recommendedName>
        <fullName evidence="1">Glutamate--cysteine ligase</fullName>
        <ecNumber evidence="1">6.3.2.2</ecNumber>
    </recommendedName>
    <alternativeName>
        <fullName evidence="1">Gamma-ECS</fullName>
        <shortName evidence="1">GCS</shortName>
    </alternativeName>
    <alternativeName>
        <fullName evidence="1">Gamma-glutamylcysteine synthetase</fullName>
    </alternativeName>
</protein>
<dbReference type="EC" id="6.3.2.2" evidence="1"/>
<dbReference type="EMBL" id="CP001113">
    <property type="protein sequence ID" value="ACF64863.1"/>
    <property type="molecule type" value="Genomic_DNA"/>
</dbReference>
<dbReference type="RefSeq" id="WP_000611821.1">
    <property type="nucleotide sequence ID" value="NZ_CCMR01000001.1"/>
</dbReference>
<dbReference type="SMR" id="B4T394"/>
<dbReference type="KEGG" id="see:SNSL254_A3020"/>
<dbReference type="HOGENOM" id="CLU_020728_3_0_6"/>
<dbReference type="UniPathway" id="UPA00142">
    <property type="reaction ID" value="UER00209"/>
</dbReference>
<dbReference type="Proteomes" id="UP000008824">
    <property type="component" value="Chromosome"/>
</dbReference>
<dbReference type="GO" id="GO:0005829">
    <property type="term" value="C:cytosol"/>
    <property type="evidence" value="ECO:0007669"/>
    <property type="project" value="TreeGrafter"/>
</dbReference>
<dbReference type="GO" id="GO:0005524">
    <property type="term" value="F:ATP binding"/>
    <property type="evidence" value="ECO:0007669"/>
    <property type="project" value="UniProtKB-KW"/>
</dbReference>
<dbReference type="GO" id="GO:0004357">
    <property type="term" value="F:glutamate-cysteine ligase activity"/>
    <property type="evidence" value="ECO:0007669"/>
    <property type="project" value="UniProtKB-UniRule"/>
</dbReference>
<dbReference type="GO" id="GO:0046872">
    <property type="term" value="F:metal ion binding"/>
    <property type="evidence" value="ECO:0007669"/>
    <property type="project" value="TreeGrafter"/>
</dbReference>
<dbReference type="GO" id="GO:0006750">
    <property type="term" value="P:glutathione biosynthetic process"/>
    <property type="evidence" value="ECO:0007669"/>
    <property type="project" value="UniProtKB-UniRule"/>
</dbReference>
<dbReference type="FunFam" id="3.30.590.20:FF:000001">
    <property type="entry name" value="Glutamate--cysteine ligase"/>
    <property type="match status" value="1"/>
</dbReference>
<dbReference type="Gene3D" id="3.30.590.20">
    <property type="match status" value="1"/>
</dbReference>
<dbReference type="HAMAP" id="MF_00578">
    <property type="entry name" value="Glu_cys_ligase"/>
    <property type="match status" value="1"/>
</dbReference>
<dbReference type="InterPro" id="IPR014746">
    <property type="entry name" value="Gln_synth/guanido_kin_cat_dom"/>
</dbReference>
<dbReference type="InterPro" id="IPR007370">
    <property type="entry name" value="Glu_cys_ligase"/>
</dbReference>
<dbReference type="InterPro" id="IPR006334">
    <property type="entry name" value="Glut_cys_ligase"/>
</dbReference>
<dbReference type="NCBIfam" id="TIGR01434">
    <property type="entry name" value="glu_cys_ligase"/>
    <property type="match status" value="1"/>
</dbReference>
<dbReference type="PANTHER" id="PTHR38761">
    <property type="entry name" value="GLUTAMATE--CYSTEINE LIGASE"/>
    <property type="match status" value="1"/>
</dbReference>
<dbReference type="PANTHER" id="PTHR38761:SF1">
    <property type="entry name" value="GLUTAMATE--CYSTEINE LIGASE"/>
    <property type="match status" value="1"/>
</dbReference>
<dbReference type="Pfam" id="PF04262">
    <property type="entry name" value="Glu_cys_ligase"/>
    <property type="match status" value="1"/>
</dbReference>
<dbReference type="SUPFAM" id="SSF55931">
    <property type="entry name" value="Glutamine synthetase/guanido kinase"/>
    <property type="match status" value="1"/>
</dbReference>
<comment type="catalytic activity">
    <reaction evidence="1">
        <text>L-cysteine + L-glutamate + ATP = gamma-L-glutamyl-L-cysteine + ADP + phosphate + H(+)</text>
        <dbReference type="Rhea" id="RHEA:13285"/>
        <dbReference type="ChEBI" id="CHEBI:15378"/>
        <dbReference type="ChEBI" id="CHEBI:29985"/>
        <dbReference type="ChEBI" id="CHEBI:30616"/>
        <dbReference type="ChEBI" id="CHEBI:35235"/>
        <dbReference type="ChEBI" id="CHEBI:43474"/>
        <dbReference type="ChEBI" id="CHEBI:58173"/>
        <dbReference type="ChEBI" id="CHEBI:456216"/>
        <dbReference type="EC" id="6.3.2.2"/>
    </reaction>
</comment>
<comment type="pathway">
    <text evidence="1">Sulfur metabolism; glutathione biosynthesis; glutathione from L-cysteine and L-glutamate: step 1/2.</text>
</comment>
<comment type="similarity">
    <text evidence="1">Belongs to the glutamate--cysteine ligase type 1 family. Type 1 subfamily.</text>
</comment>
<accession>B4T394</accession>
<reference key="1">
    <citation type="journal article" date="2011" name="J. Bacteriol.">
        <title>Comparative genomics of 28 Salmonella enterica isolates: evidence for CRISPR-mediated adaptive sublineage evolution.</title>
        <authorList>
            <person name="Fricke W.F."/>
            <person name="Mammel M.K."/>
            <person name="McDermott P.F."/>
            <person name="Tartera C."/>
            <person name="White D.G."/>
            <person name="Leclerc J.E."/>
            <person name="Ravel J."/>
            <person name="Cebula T.A."/>
        </authorList>
    </citation>
    <scope>NUCLEOTIDE SEQUENCE [LARGE SCALE GENOMIC DNA]</scope>
    <source>
        <strain>SL254</strain>
    </source>
</reference>
<feature type="chain" id="PRO_1000129606" description="Glutamate--cysteine ligase">
    <location>
        <begin position="1"/>
        <end position="518"/>
    </location>
</feature>
<sequence length="518" mass="58384">MIPDVSQALAWLEKHPQALKGIQRGLERETLRVNADGTLATTGHPEALGSALTHKWITTDFAEALLEFITPVDGDIQHMLTFMRDLHRYTARKLGDERMWPLSMPCYIAEGQDIELAQYGTSNTGRFKTLYREGLKNRYGALMQTISGVHYNFSLPMAFWQAKCGVTEGEAAKEKISAGYFRLIRNYYRFGWVIPYLFGASPAICSSFLQGKPTTLPFEKTDCGMYYLPYATSLRLSDLGYTNKSQSNLGITFNDLHEYVAGLKRAIKTPSEEYARIGVEKDGKRLQINSNVLQIENELYAPIRPKRVTRSGESPSDALLRGGIEYIEVRSLDINPFSPIGVDEQQVRFLDLFMVWCVLADAPEMSSDELLCTRTNWNRVILEGRKPGLTLGIGCETAQFPLPKVGKDLFRDLKRVAQTLDSIHGGEEYQKVCDELVACFDNPELTFSARILRSMIDEGIGGTGKAFGEAYRNLLREEPLEILQEEEFIAERDASVRRQQEIEAADTEPFAAWLAKHA</sequence>
<organism>
    <name type="scientific">Salmonella newport (strain SL254)</name>
    <dbReference type="NCBI Taxonomy" id="423368"/>
    <lineage>
        <taxon>Bacteria</taxon>
        <taxon>Pseudomonadati</taxon>
        <taxon>Pseudomonadota</taxon>
        <taxon>Gammaproteobacteria</taxon>
        <taxon>Enterobacterales</taxon>
        <taxon>Enterobacteriaceae</taxon>
        <taxon>Salmonella</taxon>
    </lineage>
</organism>
<keyword id="KW-0067">ATP-binding</keyword>
<keyword id="KW-0317">Glutathione biosynthesis</keyword>
<keyword id="KW-0436">Ligase</keyword>
<keyword id="KW-0547">Nucleotide-binding</keyword>
<gene>
    <name evidence="1" type="primary">gshA</name>
    <name type="ordered locus">SNSL254_A3020</name>
</gene>
<evidence type="ECO:0000255" key="1">
    <source>
        <dbReference type="HAMAP-Rule" id="MF_00578"/>
    </source>
</evidence>
<name>GSH1_SALNS</name>